<sequence length="163" mass="18010">MITTGRVWKFWDNVSTDEITPGRYNLTKDPQELARIAFIEVRPEFAEKVRRGDVVVGGKNFGIGSSRESAALALKAAGVSGIIAKSFGRIFYRNAVNLGIPLLIGDTDELEDGDVITVNWETGEVRKNGQTLQFEPLPGFLLEIVREGGILEFIRRRGDLCIG</sequence>
<name>LEUD2_PYRAB</name>
<organism>
    <name type="scientific">Pyrococcus abyssi (strain GE5 / Orsay)</name>
    <dbReference type="NCBI Taxonomy" id="272844"/>
    <lineage>
        <taxon>Archaea</taxon>
        <taxon>Methanobacteriati</taxon>
        <taxon>Methanobacteriota</taxon>
        <taxon>Thermococci</taxon>
        <taxon>Thermococcales</taxon>
        <taxon>Thermococcaceae</taxon>
        <taxon>Pyrococcus</taxon>
    </lineage>
</organism>
<dbReference type="EC" id="4.2.1.33"/>
<dbReference type="EMBL" id="AJ248284">
    <property type="protein sequence ID" value="CAB49360.1"/>
    <property type="molecule type" value="Genomic_DNA"/>
</dbReference>
<dbReference type="EMBL" id="HE613800">
    <property type="protein sequence ID" value="CCE69819.1"/>
    <property type="molecule type" value="Genomic_DNA"/>
</dbReference>
<dbReference type="PIR" id="A75160">
    <property type="entry name" value="A75160"/>
</dbReference>
<dbReference type="RefSeq" id="WP_010867561.1">
    <property type="nucleotide sequence ID" value="NC_000868.1"/>
</dbReference>
<dbReference type="SMR" id="Q9V1I9"/>
<dbReference type="STRING" id="272844.PAB0288"/>
<dbReference type="KEGG" id="pab:PAB0288"/>
<dbReference type="PATRIC" id="fig|272844.11.peg.463"/>
<dbReference type="eggNOG" id="arCOG02230">
    <property type="taxonomic scope" value="Archaea"/>
</dbReference>
<dbReference type="HOGENOM" id="CLU_081378_1_1_2"/>
<dbReference type="OrthoDB" id="6505at2157"/>
<dbReference type="PhylomeDB" id="Q9V1I9"/>
<dbReference type="UniPathway" id="UPA00048">
    <property type="reaction ID" value="UER00071"/>
</dbReference>
<dbReference type="Proteomes" id="UP000000810">
    <property type="component" value="Chromosome"/>
</dbReference>
<dbReference type="Proteomes" id="UP000009139">
    <property type="component" value="Chromosome"/>
</dbReference>
<dbReference type="GO" id="GO:0003861">
    <property type="term" value="F:3-isopropylmalate dehydratase activity"/>
    <property type="evidence" value="ECO:0007669"/>
    <property type="project" value="UniProtKB-UniRule"/>
</dbReference>
<dbReference type="GO" id="GO:0009098">
    <property type="term" value="P:L-leucine biosynthetic process"/>
    <property type="evidence" value="ECO:0007669"/>
    <property type="project" value="UniProtKB-UniRule"/>
</dbReference>
<dbReference type="CDD" id="cd01577">
    <property type="entry name" value="IPMI_Swivel"/>
    <property type="match status" value="1"/>
</dbReference>
<dbReference type="Gene3D" id="3.20.19.10">
    <property type="entry name" value="Aconitase, domain 4"/>
    <property type="match status" value="1"/>
</dbReference>
<dbReference type="HAMAP" id="MF_01032">
    <property type="entry name" value="LeuD_type2"/>
    <property type="match status" value="1"/>
</dbReference>
<dbReference type="InterPro" id="IPR015928">
    <property type="entry name" value="Aconitase/3IPM_dehydase_swvl"/>
</dbReference>
<dbReference type="InterPro" id="IPR000573">
    <property type="entry name" value="AconitaseA/IPMdHydase_ssu_swvl"/>
</dbReference>
<dbReference type="InterPro" id="IPR033940">
    <property type="entry name" value="IPMI_Swivel"/>
</dbReference>
<dbReference type="InterPro" id="IPR050075">
    <property type="entry name" value="LeuD"/>
</dbReference>
<dbReference type="InterPro" id="IPR011827">
    <property type="entry name" value="LeuD_type2/HacB/DmdB"/>
</dbReference>
<dbReference type="NCBIfam" id="TIGR02087">
    <property type="entry name" value="LEUD_arch"/>
    <property type="match status" value="1"/>
</dbReference>
<dbReference type="PANTHER" id="PTHR43345:SF9">
    <property type="entry name" value="3-ISOPROPYLMALATE DEHYDRATASE SMALL SUBUNIT"/>
    <property type="match status" value="1"/>
</dbReference>
<dbReference type="PANTHER" id="PTHR43345">
    <property type="entry name" value="3-ISOPROPYLMALATE DEHYDRATASE SMALL SUBUNIT 2-RELATED-RELATED"/>
    <property type="match status" value="1"/>
</dbReference>
<dbReference type="Pfam" id="PF00694">
    <property type="entry name" value="Aconitase_C"/>
    <property type="match status" value="1"/>
</dbReference>
<dbReference type="SUPFAM" id="SSF52016">
    <property type="entry name" value="LeuD/IlvD-like"/>
    <property type="match status" value="1"/>
</dbReference>
<keyword id="KW-0028">Amino-acid biosynthesis</keyword>
<keyword id="KW-0100">Branched-chain amino acid biosynthesis</keyword>
<keyword id="KW-0432">Leucine biosynthesis</keyword>
<keyword id="KW-0456">Lyase</keyword>
<accession>Q9V1I9</accession>
<accession>G8ZGE0</accession>
<reference key="1">
    <citation type="journal article" date="2003" name="Mol. Microbiol.">
        <title>An integrated analysis of the genome of the hyperthermophilic archaeon Pyrococcus abyssi.</title>
        <authorList>
            <person name="Cohen G.N."/>
            <person name="Barbe V."/>
            <person name="Flament D."/>
            <person name="Galperin M."/>
            <person name="Heilig R."/>
            <person name="Lecompte O."/>
            <person name="Poch O."/>
            <person name="Prieur D."/>
            <person name="Querellou J."/>
            <person name="Ripp R."/>
            <person name="Thierry J.-C."/>
            <person name="Van der Oost J."/>
            <person name="Weissenbach J."/>
            <person name="Zivanovic Y."/>
            <person name="Forterre P."/>
        </authorList>
    </citation>
    <scope>NUCLEOTIDE SEQUENCE [LARGE SCALE GENOMIC DNA]</scope>
    <source>
        <strain>GE5 / Orsay</strain>
    </source>
</reference>
<reference key="2">
    <citation type="journal article" date="2012" name="Curr. Microbiol.">
        <title>Re-annotation of two hyperthermophilic archaea Pyrococcus abyssi GE5 and Pyrococcus furiosus DSM 3638.</title>
        <authorList>
            <person name="Gao J."/>
            <person name="Wang J."/>
        </authorList>
    </citation>
    <scope>GENOME REANNOTATION</scope>
    <source>
        <strain>GE5 / Orsay</strain>
    </source>
</reference>
<protein>
    <recommendedName>
        <fullName>3-isopropylmalate dehydratase small subunit 2</fullName>
        <ecNumber>4.2.1.33</ecNumber>
    </recommendedName>
    <alternativeName>
        <fullName>Alpha-IPM isomerase 2</fullName>
        <shortName>IPMI 2</shortName>
    </alternativeName>
    <alternativeName>
        <fullName>Isopropylmalate isomerase 2</fullName>
    </alternativeName>
</protein>
<gene>
    <name type="primary">leuD2</name>
    <name type="synonym">leuD-2</name>
    <name type="ordered locus">PYRAB04380</name>
    <name type="ORF">PAB0288</name>
</gene>
<evidence type="ECO:0000250" key="1"/>
<evidence type="ECO:0000305" key="2"/>
<feature type="chain" id="PRO_0000141945" description="3-isopropylmalate dehydratase small subunit 2">
    <location>
        <begin position="1"/>
        <end position="163"/>
    </location>
</feature>
<comment type="function">
    <text evidence="1">Catalyzes the isomerization between 2-isopropylmalate and 3-isopropylmalate, via the formation of 2-isopropylmaleate.</text>
</comment>
<comment type="catalytic activity">
    <reaction>
        <text>(2R,3S)-3-isopropylmalate = (2S)-2-isopropylmalate</text>
        <dbReference type="Rhea" id="RHEA:32287"/>
        <dbReference type="ChEBI" id="CHEBI:1178"/>
        <dbReference type="ChEBI" id="CHEBI:35121"/>
        <dbReference type="EC" id="4.2.1.33"/>
    </reaction>
</comment>
<comment type="pathway">
    <text>Amino-acid biosynthesis; L-leucine biosynthesis; L-leucine from 3-methyl-2-oxobutanoate: step 2/4.</text>
</comment>
<comment type="subunit">
    <text evidence="1">Heterodimer of LeuC and LeuD.</text>
</comment>
<comment type="similarity">
    <text evidence="2">Belongs to the LeuD family. LeuD type 2 subfamily.</text>
</comment>
<proteinExistence type="inferred from homology"/>